<dbReference type="EC" id="2.7.11.1" evidence="1"/>
<dbReference type="EMBL" id="BA000028">
    <property type="protein sequence ID" value="BAC12585.1"/>
    <property type="molecule type" value="Genomic_DNA"/>
</dbReference>
<dbReference type="RefSeq" id="WP_011065034.1">
    <property type="nucleotide sequence ID" value="NC_004193.1"/>
</dbReference>
<dbReference type="SMR" id="Q8CXL7"/>
<dbReference type="STRING" id="221109.gene:10732833"/>
<dbReference type="KEGG" id="oih:OB0629"/>
<dbReference type="eggNOG" id="COG2172">
    <property type="taxonomic scope" value="Bacteria"/>
</dbReference>
<dbReference type="HOGENOM" id="CLU_090336_11_1_9"/>
<dbReference type="OrthoDB" id="9798941at2"/>
<dbReference type="PhylomeDB" id="Q8CXL7"/>
<dbReference type="Proteomes" id="UP000000822">
    <property type="component" value="Chromosome"/>
</dbReference>
<dbReference type="GO" id="GO:0005524">
    <property type="term" value="F:ATP binding"/>
    <property type="evidence" value="ECO:0007669"/>
    <property type="project" value="UniProtKB-KW"/>
</dbReference>
<dbReference type="GO" id="GO:0106310">
    <property type="term" value="F:protein serine kinase activity"/>
    <property type="evidence" value="ECO:0007669"/>
    <property type="project" value="RHEA"/>
</dbReference>
<dbReference type="GO" id="GO:0004674">
    <property type="term" value="F:protein serine/threonine kinase activity"/>
    <property type="evidence" value="ECO:0007669"/>
    <property type="project" value="UniProtKB-KW"/>
</dbReference>
<dbReference type="GO" id="GO:0016989">
    <property type="term" value="F:sigma factor antagonist activity"/>
    <property type="evidence" value="ECO:0007669"/>
    <property type="project" value="InterPro"/>
</dbReference>
<dbReference type="CDD" id="cd16936">
    <property type="entry name" value="HATPase_RsbW-like"/>
    <property type="match status" value="1"/>
</dbReference>
<dbReference type="Gene3D" id="3.30.565.10">
    <property type="entry name" value="Histidine kinase-like ATPase, C-terminal domain"/>
    <property type="match status" value="1"/>
</dbReference>
<dbReference type="HAMAP" id="MF_00638">
    <property type="entry name" value="Anti_sigma_B"/>
    <property type="match status" value="1"/>
</dbReference>
<dbReference type="InterPro" id="IPR050267">
    <property type="entry name" value="Anti-sigma-factor_SerPK"/>
</dbReference>
<dbReference type="InterPro" id="IPR036890">
    <property type="entry name" value="HATPase_C_sf"/>
</dbReference>
<dbReference type="InterPro" id="IPR010193">
    <property type="entry name" value="RsbW"/>
</dbReference>
<dbReference type="NCBIfam" id="NF003144">
    <property type="entry name" value="PRK04069.1"/>
    <property type="match status" value="1"/>
</dbReference>
<dbReference type="NCBIfam" id="TIGR01924">
    <property type="entry name" value="rsbW_low_gc"/>
    <property type="match status" value="1"/>
</dbReference>
<dbReference type="PANTHER" id="PTHR35526">
    <property type="entry name" value="ANTI-SIGMA-F FACTOR RSBW-RELATED"/>
    <property type="match status" value="1"/>
</dbReference>
<dbReference type="PANTHER" id="PTHR35526:SF9">
    <property type="entry name" value="SERINE-PROTEIN KINASE RSBW"/>
    <property type="match status" value="1"/>
</dbReference>
<dbReference type="Pfam" id="PF13581">
    <property type="entry name" value="HATPase_c_2"/>
    <property type="match status" value="1"/>
</dbReference>
<dbReference type="SUPFAM" id="SSF55874">
    <property type="entry name" value="ATPase domain of HSP90 chaperone/DNA topoisomerase II/histidine kinase"/>
    <property type="match status" value="1"/>
</dbReference>
<accession>Q8CXL7</accession>
<organism>
    <name type="scientific">Oceanobacillus iheyensis (strain DSM 14371 / CIP 107618 / JCM 11309 / KCTC 3954 / HTE831)</name>
    <dbReference type="NCBI Taxonomy" id="221109"/>
    <lineage>
        <taxon>Bacteria</taxon>
        <taxon>Bacillati</taxon>
        <taxon>Bacillota</taxon>
        <taxon>Bacilli</taxon>
        <taxon>Bacillales</taxon>
        <taxon>Bacillaceae</taxon>
        <taxon>Oceanobacillus</taxon>
    </lineage>
</organism>
<comment type="function">
    <text evidence="1">Negative regulator of sigma-B activity. Phosphorylates and inactivates its specific antagonist protein, RsbV. Upon phosphorylation of RsbV, RsbW is released and binds to sigma-B, thereby blocking its ability to form an RNA polymerase holoenzyme (E-sigma-B).</text>
</comment>
<comment type="catalytic activity">
    <reaction evidence="1">
        <text>L-seryl-[protein] + ATP = O-phospho-L-seryl-[protein] + ADP + H(+)</text>
        <dbReference type="Rhea" id="RHEA:17989"/>
        <dbReference type="Rhea" id="RHEA-COMP:9863"/>
        <dbReference type="Rhea" id="RHEA-COMP:11604"/>
        <dbReference type="ChEBI" id="CHEBI:15378"/>
        <dbReference type="ChEBI" id="CHEBI:29999"/>
        <dbReference type="ChEBI" id="CHEBI:30616"/>
        <dbReference type="ChEBI" id="CHEBI:83421"/>
        <dbReference type="ChEBI" id="CHEBI:456216"/>
        <dbReference type="EC" id="2.7.11.1"/>
    </reaction>
</comment>
<comment type="catalytic activity">
    <reaction evidence="1">
        <text>L-threonyl-[protein] + ATP = O-phospho-L-threonyl-[protein] + ADP + H(+)</text>
        <dbReference type="Rhea" id="RHEA:46608"/>
        <dbReference type="Rhea" id="RHEA-COMP:11060"/>
        <dbReference type="Rhea" id="RHEA-COMP:11605"/>
        <dbReference type="ChEBI" id="CHEBI:15378"/>
        <dbReference type="ChEBI" id="CHEBI:30013"/>
        <dbReference type="ChEBI" id="CHEBI:30616"/>
        <dbReference type="ChEBI" id="CHEBI:61977"/>
        <dbReference type="ChEBI" id="CHEBI:456216"/>
        <dbReference type="EC" id="2.7.11.1"/>
    </reaction>
</comment>
<comment type="similarity">
    <text evidence="1">Belongs to the anti-sigma-factor family.</text>
</comment>
<gene>
    <name evidence="1" type="primary">rsbW</name>
    <name type="ordered locus">OB0629</name>
</gene>
<reference key="1">
    <citation type="journal article" date="2002" name="Nucleic Acids Res.">
        <title>Genome sequence of Oceanobacillus iheyensis isolated from the Iheya Ridge and its unexpected adaptive capabilities to extreme environments.</title>
        <authorList>
            <person name="Takami H."/>
            <person name="Takaki Y."/>
            <person name="Uchiyama I."/>
        </authorList>
    </citation>
    <scope>NUCLEOTIDE SEQUENCE [LARGE SCALE GENOMIC DNA]</scope>
    <source>
        <strain>DSM 14371 / CIP 107618 / JCM 11309 / KCTC 3954 / HTE831</strain>
    </source>
</reference>
<feature type="chain" id="PRO_0000203537" description="Serine-protein kinase RsbW">
    <location>
        <begin position="1"/>
        <end position="158"/>
    </location>
</feature>
<proteinExistence type="inferred from homology"/>
<evidence type="ECO:0000255" key="1">
    <source>
        <dbReference type="HAMAP-Rule" id="MF_00638"/>
    </source>
</evidence>
<sequence length="158" mass="17831">MSNYDYIEMKVPAKPEYVGVARLTLSGVANRMGFSYESIEDLKVAVSEAITNAVNHAYNDNESGEINIGFGIYEDHIEIMIADRGESFDLEKIKQETGPYHPEEPVEKLREGGFGLFLIEALMDDVKINNQYGVMIMMSKYIAEEEVDMDDDQISTTQ</sequence>
<protein>
    <recommendedName>
        <fullName evidence="1">Serine-protein kinase RsbW</fullName>
        <ecNumber evidence="1">2.7.11.1</ecNumber>
    </recommendedName>
    <alternativeName>
        <fullName evidence="1">Anti-sigma-B factor</fullName>
    </alternativeName>
    <alternativeName>
        <fullName evidence="1">Sigma-B negative effector RsbW</fullName>
    </alternativeName>
</protein>
<name>RSBW_OCEIH</name>
<keyword id="KW-0067">ATP-binding</keyword>
<keyword id="KW-0418">Kinase</keyword>
<keyword id="KW-0547">Nucleotide-binding</keyword>
<keyword id="KW-1185">Reference proteome</keyword>
<keyword id="KW-0723">Serine/threonine-protein kinase</keyword>
<keyword id="KW-0808">Transferase</keyword>